<dbReference type="EC" id="2.1.1.317" evidence="3"/>
<dbReference type="EMBL" id="DQ070247">
    <property type="protein sequence ID" value="AAZ08581.1"/>
    <property type="molecule type" value="Genomic_DNA"/>
</dbReference>
<dbReference type="EMBL" id="FN392322">
    <property type="protein sequence ID" value="CAY71718.1"/>
    <property type="molecule type" value="Genomic_DNA"/>
</dbReference>
<dbReference type="RefSeq" id="XP_002493897.1">
    <property type="nucleotide sequence ID" value="XM_002493852.1"/>
</dbReference>
<dbReference type="SMR" id="C4R7Z3"/>
<dbReference type="STRING" id="644223.C4R7Z3"/>
<dbReference type="EnsemblFungi" id="CAY71718">
    <property type="protein sequence ID" value="CAY71718"/>
    <property type="gene ID" value="PAS_chr4_0465"/>
</dbReference>
<dbReference type="GeneID" id="8201413"/>
<dbReference type="KEGG" id="ppa:PAS_chr4_0465"/>
<dbReference type="eggNOG" id="ENOG502QS47">
    <property type="taxonomic scope" value="Eukaryota"/>
</dbReference>
<dbReference type="HOGENOM" id="CLU_026434_5_0_1"/>
<dbReference type="InParanoid" id="C4R7Z3"/>
<dbReference type="OMA" id="GFKTWLF"/>
<dbReference type="OrthoDB" id="412182at2759"/>
<dbReference type="BioCyc" id="MetaCyc:MONOMER-19158"/>
<dbReference type="BRENDA" id="2.1.1.317">
    <property type="organism ID" value="4827"/>
</dbReference>
<dbReference type="UniPathway" id="UPA00222"/>
<dbReference type="Proteomes" id="UP000000314">
    <property type="component" value="Chromosome 4"/>
</dbReference>
<dbReference type="GO" id="GO:0016020">
    <property type="term" value="C:membrane"/>
    <property type="evidence" value="ECO:0007669"/>
    <property type="project" value="UniProtKB-SubCell"/>
</dbReference>
<dbReference type="GO" id="GO:0008168">
    <property type="term" value="F:methyltransferase activity"/>
    <property type="evidence" value="ECO:0007669"/>
    <property type="project" value="UniProtKB-KW"/>
</dbReference>
<dbReference type="GO" id="GO:0032259">
    <property type="term" value="P:methylation"/>
    <property type="evidence" value="ECO:0007669"/>
    <property type="project" value="UniProtKB-KW"/>
</dbReference>
<dbReference type="GO" id="GO:0006665">
    <property type="term" value="P:sphingolipid metabolic process"/>
    <property type="evidence" value="ECO:0007669"/>
    <property type="project" value="UniProtKB-UniPathway"/>
</dbReference>
<dbReference type="CDD" id="cd02440">
    <property type="entry name" value="AdoMet_MTases"/>
    <property type="match status" value="1"/>
</dbReference>
<dbReference type="Gene3D" id="3.40.50.150">
    <property type="entry name" value="Vaccinia Virus protein VP39"/>
    <property type="match status" value="1"/>
</dbReference>
<dbReference type="InterPro" id="IPR029063">
    <property type="entry name" value="SAM-dependent_MTases_sf"/>
</dbReference>
<dbReference type="InterPro" id="IPR052290">
    <property type="entry name" value="Sphingo_C9-MT"/>
</dbReference>
<dbReference type="PANTHER" id="PTHR45197:SF1">
    <property type="entry name" value="SPHINGOLIPID C9-METHYLTRANSFERASE A-RELATED"/>
    <property type="match status" value="1"/>
</dbReference>
<dbReference type="PANTHER" id="PTHR45197">
    <property type="entry name" value="SYNTHASE, PUTATIVE (AFU_ORTHOLOGUE AFUA_7G04190)-RELATED"/>
    <property type="match status" value="1"/>
</dbReference>
<dbReference type="Pfam" id="PF02353">
    <property type="entry name" value="CMAS"/>
    <property type="match status" value="1"/>
</dbReference>
<dbReference type="SUPFAM" id="SSF53335">
    <property type="entry name" value="S-adenosyl-L-methionine-dependent methyltransferases"/>
    <property type="match status" value="1"/>
</dbReference>
<comment type="function">
    <text evidence="3">Catalyzes methylation of the sphingoid base component of glucosylceramides (GluCers) at the C9-position. Sphingolipid C9-methylation requires 4,8-desaturated ceramides as substrates. Glucosylceramides play important roles in growth, differentiation and pathogenicity. The methyl group at the C9-position distinguishes fungal glucosylceramides from those of plants and animals, and may thus play a role in host-pathogen interactions enabling the host to recognize the fungal attack and initiate specific defense responses.</text>
</comment>
<comment type="catalytic activity">
    <reaction evidence="3">
        <text>a (4E,8E)-4-sphinga-4,8-dienine ceramide + S-adenosyl-L-methionine = a 9-methyl-(4E,8E)-sphinga-4,8-dienine ceramide + S-adenosyl-L-homocysteine + H(+)</text>
        <dbReference type="Rhea" id="RHEA:46804"/>
        <dbReference type="ChEBI" id="CHEBI:15378"/>
        <dbReference type="ChEBI" id="CHEBI:57856"/>
        <dbReference type="ChEBI" id="CHEBI:59789"/>
        <dbReference type="ChEBI" id="CHEBI:85953"/>
        <dbReference type="ChEBI" id="CHEBI:87033"/>
        <dbReference type="EC" id="2.1.1.317"/>
    </reaction>
</comment>
<comment type="pathway">
    <text evidence="7">Lipid metabolism; sphingolipid metabolism.</text>
</comment>
<comment type="subcellular location">
    <subcellularLocation>
        <location evidence="3">Membrane</location>
        <topology evidence="2">Multi-pass membrane protein</topology>
    </subcellularLocation>
</comment>
<comment type="disruption phenotype">
    <text evidence="3 4">Produces only non-methylated glucosylceramides (PubMed:16339149). Shows no alteration of growth and no increase in the level of resistance to plant defensins MsDef1 and RsAFP2 (PubMed:19028992).</text>
</comment>
<comment type="similarity">
    <text evidence="6">Belongs to the CFA/CMAS family.</text>
</comment>
<gene>
    <name type="ordered locus">PAS_chr4_0465</name>
</gene>
<name>C9MT_KOMPG</name>
<sequence length="489" mass="56272">MSQTESTKGVKITNYAAIKNAPLPADGPGAKNFSNWLLLGLLTGVPLFVTRKFHGGLKTFIFFFILFAIPILMAYWTVLSSYSPRLNEKVQFPNRGVEHYLKFHDDQLAARYQGQNKIPMETFHELYFEGKVSFKGDALDALEYRHDWASFRFTLSLFRFFLLGMIPEVIMHSRSQDEEQVRDHYDRGDDFYSWFLGDRMVYTSGLISDVNKDESLEELQDNKLKTVCEKIQLKEGEYLLDLGCGWGTLAAFASSQYGAKVTGITLGKNQTKYGNDKIASFGVDEKQSRILCHDYRDTPLPKDENGNTTKYDKITCLEMAEHVGVRKFRSFLQQVYDMLDDDGVFFLQYAGLRKSWQYEDLIWGLFMNKYIFPGADASTPLDFVVSALEATGFETVSIDNIGVHYSATLYRWYKNWLSNRDNVVNKYGIKWFKIWEYFLASSTIISRQGSATCYQIVLRKNLNSYDRAGYISTQEGLQGPISRKTDWVK</sequence>
<organism>
    <name type="scientific">Komagataella phaffii (strain GS115 / ATCC 20864)</name>
    <name type="common">Yeast</name>
    <name type="synonym">Pichia pastoris</name>
    <dbReference type="NCBI Taxonomy" id="644223"/>
    <lineage>
        <taxon>Eukaryota</taxon>
        <taxon>Fungi</taxon>
        <taxon>Dikarya</taxon>
        <taxon>Ascomycota</taxon>
        <taxon>Saccharomycotina</taxon>
        <taxon>Pichiomycetes</taxon>
        <taxon>Pichiales</taxon>
        <taxon>Pichiaceae</taxon>
        <taxon>Komagataella</taxon>
    </lineage>
</organism>
<protein>
    <recommendedName>
        <fullName evidence="5">Sphingolipid C9-methyltransferase</fullName>
        <shortName>C-9-MT</shortName>
        <ecNumber evidence="3">2.1.1.317</ecNumber>
    </recommendedName>
</protein>
<evidence type="ECO:0000250" key="1">
    <source>
        <dbReference type="UniProtKB" id="P9WPB7"/>
    </source>
</evidence>
<evidence type="ECO:0000255" key="2"/>
<evidence type="ECO:0000269" key="3">
    <source>
    </source>
</evidence>
<evidence type="ECO:0000269" key="4">
    <source>
    </source>
</evidence>
<evidence type="ECO:0000303" key="5">
    <source>
    </source>
</evidence>
<evidence type="ECO:0000305" key="6"/>
<evidence type="ECO:0000305" key="7">
    <source>
    </source>
</evidence>
<keyword id="KW-0444">Lipid biosynthesis</keyword>
<keyword id="KW-0443">Lipid metabolism</keyword>
<keyword id="KW-0472">Membrane</keyword>
<keyword id="KW-0489">Methyltransferase</keyword>
<keyword id="KW-1185">Reference proteome</keyword>
<keyword id="KW-0949">S-adenosyl-L-methionine</keyword>
<keyword id="KW-0746">Sphingolipid metabolism</keyword>
<keyword id="KW-0808">Transferase</keyword>
<keyword id="KW-0812">Transmembrane</keyword>
<keyword id="KW-1133">Transmembrane helix</keyword>
<accession>C4R7Z3</accession>
<accession>Q2QJ12</accession>
<reference key="1">
    <citation type="journal article" date="2006" name="J. Biol. Chem.">
        <title>Identification of fungal sphingolipid C9-methyltransferases by phylogenetic profiling.</title>
        <authorList>
            <person name="Ternes P."/>
            <person name="Sperling P."/>
            <person name="Albrecht S."/>
            <person name="Franke S."/>
            <person name="Cregg J.M."/>
            <person name="Warnecke D."/>
            <person name="Heinz E."/>
        </authorList>
    </citation>
    <scope>NUCLEOTIDE SEQUENCE [GENOMIC DNA]</scope>
    <scope>FUNCTION</scope>
    <scope>CATALYTIC ACTIVITY</scope>
    <scope>PATHWAY</scope>
    <scope>SUBCELLULAR LOCATION</scope>
    <scope>DISRUPTION PHENOTYPE</scope>
    <source>
        <strain>GS115 / ATCC 20864</strain>
    </source>
</reference>
<reference key="2">
    <citation type="journal article" date="2009" name="Nat. Biotechnol.">
        <title>Genome sequence of the recombinant protein production host Pichia pastoris.</title>
        <authorList>
            <person name="De Schutter K."/>
            <person name="Lin Y.-C."/>
            <person name="Tiels P."/>
            <person name="Van Hecke A."/>
            <person name="Glinka S."/>
            <person name="Weber-Lehmann J."/>
            <person name="Rouze P."/>
            <person name="Van de Peer Y."/>
            <person name="Callewaert N."/>
        </authorList>
    </citation>
    <scope>NUCLEOTIDE SEQUENCE [LARGE SCALE GENOMIC DNA]</scope>
    <source>
        <strain>GS115 / ATCC 20864</strain>
    </source>
</reference>
<reference key="3">
    <citation type="journal article" date="2009" name="Eukaryot. Cell">
        <title>Sphingolipid C-9 methyltransferases are important for growth and virulence but not for sensitivity to antifungal plant defensins in Fusarium graminearum.</title>
        <authorList>
            <person name="Ramamoorthy V."/>
            <person name="Cahoon E.B."/>
            <person name="Thokala M."/>
            <person name="Kaur J."/>
            <person name="Li J."/>
            <person name="Shah D.M."/>
        </authorList>
    </citation>
    <scope>DISRUPTION PHENOTYPE</scope>
</reference>
<proteinExistence type="evidence at protein level"/>
<feature type="chain" id="PRO_0000434798" description="Sphingolipid C9-methyltransferase">
    <location>
        <begin position="1"/>
        <end position="489"/>
    </location>
</feature>
<feature type="transmembrane region" description="Helical" evidence="2">
    <location>
        <begin position="29"/>
        <end position="49"/>
    </location>
</feature>
<feature type="transmembrane region" description="Helical" evidence="2">
    <location>
        <begin position="59"/>
        <end position="79"/>
    </location>
</feature>
<feature type="binding site" evidence="1">
    <location>
        <begin position="202"/>
        <end position="203"/>
    </location>
    <ligand>
        <name>S-adenosyl-L-methionine</name>
        <dbReference type="ChEBI" id="CHEBI:59789"/>
    </ligand>
</feature>
<feature type="binding site" evidence="1">
    <location>
        <begin position="239"/>
        <end position="247"/>
    </location>
    <ligand>
        <name>S-adenosyl-L-methionine</name>
        <dbReference type="ChEBI" id="CHEBI:59789"/>
    </ligand>
</feature>
<feature type="binding site" evidence="1">
    <location>
        <begin position="265"/>
        <end position="270"/>
    </location>
    <ligand>
        <name>S-adenosyl-L-methionine</name>
        <dbReference type="ChEBI" id="CHEBI:59789"/>
    </ligand>
</feature>
<feature type="binding site" evidence="1">
    <location>
        <begin position="295"/>
        <end position="296"/>
    </location>
    <ligand>
        <name>S-adenosyl-L-methionine</name>
        <dbReference type="ChEBI" id="CHEBI:59789"/>
    </ligand>
</feature>